<sequence>MMHAEIVSIGDELLKGQRVNTNAASIAAMLSLEGVPVRRITACSDREEEMQEVFSEALGRSELVLVTGGLGPTRDDRTRNAVLKLLNRGLTLDPGSLREVELRVFARGREMTELMRSQAMVVEGSLAIPNTKGTAAGMILNCGPRFSERHLVLMPGVPVEMQAMMEGTVLPWVRERSGTTIIHTPVKTIGVGEATLAEMIVSVEDALPEGTTVAYLPHGAGVDVMVSTIAEARERAEEDNAAVAGAISRLAAEFVYAVGNRSLEETILDMLRGQQETLAIAESCTGGLVASRITDVAGSSGVFTGGFVVYSNIAKEVQLGVSPGLLDAFGAVSQEVARAMALGCLRRSGATIAIATTGIAGPGGATPDKPVGMLALGLARRTAGSQGPHVESSVLYMHGDRHQNKLRFSQAALRMLWEALRRSGSSSE</sequence>
<name>CINAL_CHLPM</name>
<reference key="1">
    <citation type="submission" date="2007-03" db="EMBL/GenBank/DDBJ databases">
        <title>Complete sequence of Prosthecochloris vibrioformis DSM 265.</title>
        <authorList>
            <consortium name="US DOE Joint Genome Institute"/>
            <person name="Copeland A."/>
            <person name="Lucas S."/>
            <person name="Lapidus A."/>
            <person name="Barry K."/>
            <person name="Detter J.C."/>
            <person name="Glavina del Rio T."/>
            <person name="Hammon N."/>
            <person name="Israni S."/>
            <person name="Pitluck S."/>
            <person name="Schmutz J."/>
            <person name="Larimer F."/>
            <person name="Land M."/>
            <person name="Hauser L."/>
            <person name="Mikhailova N."/>
            <person name="Li T."/>
            <person name="Overmann J."/>
            <person name="Schuster S.C."/>
            <person name="Bryant D.A."/>
            <person name="Richardson P."/>
        </authorList>
    </citation>
    <scope>NUCLEOTIDE SEQUENCE [LARGE SCALE GENOMIC DNA]</scope>
    <source>
        <strain>DSM 265 / 1930</strain>
    </source>
</reference>
<evidence type="ECO:0000255" key="1">
    <source>
        <dbReference type="HAMAP-Rule" id="MF_00226"/>
    </source>
</evidence>
<gene>
    <name type="ordered locus">Cvib_1625</name>
</gene>
<proteinExistence type="inferred from homology"/>
<organism>
    <name type="scientific">Chlorobium phaeovibrioides (strain DSM 265 / 1930)</name>
    <name type="common">Prosthecochloris vibrioformis (strain DSM 265)</name>
    <dbReference type="NCBI Taxonomy" id="290318"/>
    <lineage>
        <taxon>Bacteria</taxon>
        <taxon>Pseudomonadati</taxon>
        <taxon>Chlorobiota</taxon>
        <taxon>Chlorobiia</taxon>
        <taxon>Chlorobiales</taxon>
        <taxon>Chlorobiaceae</taxon>
        <taxon>Chlorobium/Pelodictyon group</taxon>
        <taxon>Chlorobium</taxon>
    </lineage>
</organism>
<accession>A4SGM6</accession>
<dbReference type="EMBL" id="CP000607">
    <property type="protein sequence ID" value="ABP37635.1"/>
    <property type="molecule type" value="Genomic_DNA"/>
</dbReference>
<dbReference type="SMR" id="A4SGM6"/>
<dbReference type="STRING" id="290318.Cvib_1625"/>
<dbReference type="KEGG" id="pvi:Cvib_1625"/>
<dbReference type="eggNOG" id="COG1058">
    <property type="taxonomic scope" value="Bacteria"/>
</dbReference>
<dbReference type="eggNOG" id="COG1546">
    <property type="taxonomic scope" value="Bacteria"/>
</dbReference>
<dbReference type="HOGENOM" id="CLU_030805_9_3_10"/>
<dbReference type="OrthoDB" id="9801454at2"/>
<dbReference type="CDD" id="cd00885">
    <property type="entry name" value="cinA"/>
    <property type="match status" value="1"/>
</dbReference>
<dbReference type="Gene3D" id="3.90.950.20">
    <property type="entry name" value="CinA-like"/>
    <property type="match status" value="1"/>
</dbReference>
<dbReference type="Gene3D" id="3.40.980.10">
    <property type="entry name" value="MoaB/Mog-like domain"/>
    <property type="match status" value="1"/>
</dbReference>
<dbReference type="HAMAP" id="MF_00226_B">
    <property type="entry name" value="CinA_B"/>
    <property type="match status" value="1"/>
</dbReference>
<dbReference type="InterPro" id="IPR050101">
    <property type="entry name" value="CinA"/>
</dbReference>
<dbReference type="InterPro" id="IPR036653">
    <property type="entry name" value="CinA-like_C"/>
</dbReference>
<dbReference type="InterPro" id="IPR008136">
    <property type="entry name" value="CinA_C"/>
</dbReference>
<dbReference type="InterPro" id="IPR041424">
    <property type="entry name" value="CinA_KH"/>
</dbReference>
<dbReference type="InterPro" id="IPR008135">
    <property type="entry name" value="Competence-induced_CinA"/>
</dbReference>
<dbReference type="InterPro" id="IPR036425">
    <property type="entry name" value="MoaB/Mog-like_dom_sf"/>
</dbReference>
<dbReference type="InterPro" id="IPR001453">
    <property type="entry name" value="MoaB/Mog_dom"/>
</dbReference>
<dbReference type="NCBIfam" id="TIGR00200">
    <property type="entry name" value="cinA_nterm"/>
    <property type="match status" value="1"/>
</dbReference>
<dbReference type="NCBIfam" id="TIGR00199">
    <property type="entry name" value="PncC_domain"/>
    <property type="match status" value="1"/>
</dbReference>
<dbReference type="PANTHER" id="PTHR13939">
    <property type="entry name" value="NICOTINAMIDE-NUCLEOTIDE AMIDOHYDROLASE PNCC"/>
    <property type="match status" value="1"/>
</dbReference>
<dbReference type="PANTHER" id="PTHR13939:SF0">
    <property type="entry name" value="NMN AMIDOHYDROLASE-LIKE PROTEIN YFAY"/>
    <property type="match status" value="1"/>
</dbReference>
<dbReference type="Pfam" id="PF02464">
    <property type="entry name" value="CinA"/>
    <property type="match status" value="1"/>
</dbReference>
<dbReference type="Pfam" id="PF18146">
    <property type="entry name" value="CinA_KH"/>
    <property type="match status" value="1"/>
</dbReference>
<dbReference type="Pfam" id="PF00994">
    <property type="entry name" value="MoCF_biosynth"/>
    <property type="match status" value="1"/>
</dbReference>
<dbReference type="PIRSF" id="PIRSF006728">
    <property type="entry name" value="CinA"/>
    <property type="match status" value="1"/>
</dbReference>
<dbReference type="SMART" id="SM00852">
    <property type="entry name" value="MoCF_biosynth"/>
    <property type="match status" value="1"/>
</dbReference>
<dbReference type="SUPFAM" id="SSF142433">
    <property type="entry name" value="CinA-like"/>
    <property type="match status" value="1"/>
</dbReference>
<dbReference type="SUPFAM" id="SSF53218">
    <property type="entry name" value="Molybdenum cofactor biosynthesis proteins"/>
    <property type="match status" value="1"/>
</dbReference>
<feature type="chain" id="PRO_0000336521" description="CinA-like protein">
    <location>
        <begin position="1"/>
        <end position="428"/>
    </location>
</feature>
<comment type="similarity">
    <text evidence="1">Belongs to the CinA family.</text>
</comment>
<protein>
    <recommendedName>
        <fullName evidence="1">CinA-like protein</fullName>
    </recommendedName>
</protein>